<gene>
    <name evidence="1" type="primary">rplP</name>
    <name type="ordered locus">MGAS10270_Spy0053</name>
</gene>
<reference key="1">
    <citation type="journal article" date="2006" name="Proc. Natl. Acad. Sci. U.S.A.">
        <title>Molecular genetic anatomy of inter- and intraserotype variation in the human bacterial pathogen group A Streptococcus.</title>
        <authorList>
            <person name="Beres S.B."/>
            <person name="Richter E.W."/>
            <person name="Nagiec M.J."/>
            <person name="Sumby P."/>
            <person name="Porcella S.F."/>
            <person name="DeLeo F.R."/>
            <person name="Musser J.M."/>
        </authorList>
    </citation>
    <scope>NUCLEOTIDE SEQUENCE [LARGE SCALE GENOMIC DNA]</scope>
    <source>
        <strain>MGAS10270</strain>
    </source>
</reference>
<organism>
    <name type="scientific">Streptococcus pyogenes serotype M2 (strain MGAS10270)</name>
    <dbReference type="NCBI Taxonomy" id="370552"/>
    <lineage>
        <taxon>Bacteria</taxon>
        <taxon>Bacillati</taxon>
        <taxon>Bacillota</taxon>
        <taxon>Bacilli</taxon>
        <taxon>Lactobacillales</taxon>
        <taxon>Streptococcaceae</taxon>
        <taxon>Streptococcus</taxon>
    </lineage>
</organism>
<dbReference type="EMBL" id="CP000260">
    <property type="protein sequence ID" value="ABF33118.1"/>
    <property type="molecule type" value="Genomic_DNA"/>
</dbReference>
<dbReference type="RefSeq" id="WP_002986644.1">
    <property type="nucleotide sequence ID" value="NZ_CVUH01000001.1"/>
</dbReference>
<dbReference type="SMR" id="Q1JJ55"/>
<dbReference type="GeneID" id="69900033"/>
<dbReference type="KEGG" id="sph:MGAS10270_Spy0053"/>
<dbReference type="HOGENOM" id="CLU_078858_2_1_9"/>
<dbReference type="Proteomes" id="UP000002436">
    <property type="component" value="Chromosome"/>
</dbReference>
<dbReference type="GO" id="GO:0022625">
    <property type="term" value="C:cytosolic large ribosomal subunit"/>
    <property type="evidence" value="ECO:0007669"/>
    <property type="project" value="TreeGrafter"/>
</dbReference>
<dbReference type="GO" id="GO:0019843">
    <property type="term" value="F:rRNA binding"/>
    <property type="evidence" value="ECO:0007669"/>
    <property type="project" value="UniProtKB-UniRule"/>
</dbReference>
<dbReference type="GO" id="GO:0003735">
    <property type="term" value="F:structural constituent of ribosome"/>
    <property type="evidence" value="ECO:0007669"/>
    <property type="project" value="InterPro"/>
</dbReference>
<dbReference type="GO" id="GO:0000049">
    <property type="term" value="F:tRNA binding"/>
    <property type="evidence" value="ECO:0007669"/>
    <property type="project" value="UniProtKB-KW"/>
</dbReference>
<dbReference type="GO" id="GO:0006412">
    <property type="term" value="P:translation"/>
    <property type="evidence" value="ECO:0007669"/>
    <property type="project" value="UniProtKB-UniRule"/>
</dbReference>
<dbReference type="CDD" id="cd01433">
    <property type="entry name" value="Ribosomal_L16_L10e"/>
    <property type="match status" value="1"/>
</dbReference>
<dbReference type="FunFam" id="3.90.1170.10:FF:000001">
    <property type="entry name" value="50S ribosomal protein L16"/>
    <property type="match status" value="1"/>
</dbReference>
<dbReference type="Gene3D" id="3.90.1170.10">
    <property type="entry name" value="Ribosomal protein L10e/L16"/>
    <property type="match status" value="1"/>
</dbReference>
<dbReference type="HAMAP" id="MF_01342">
    <property type="entry name" value="Ribosomal_uL16"/>
    <property type="match status" value="1"/>
</dbReference>
<dbReference type="InterPro" id="IPR047873">
    <property type="entry name" value="Ribosomal_uL16"/>
</dbReference>
<dbReference type="InterPro" id="IPR000114">
    <property type="entry name" value="Ribosomal_uL16_bact-type"/>
</dbReference>
<dbReference type="InterPro" id="IPR020798">
    <property type="entry name" value="Ribosomal_uL16_CS"/>
</dbReference>
<dbReference type="InterPro" id="IPR016180">
    <property type="entry name" value="Ribosomal_uL16_dom"/>
</dbReference>
<dbReference type="InterPro" id="IPR036920">
    <property type="entry name" value="Ribosomal_uL16_sf"/>
</dbReference>
<dbReference type="NCBIfam" id="TIGR01164">
    <property type="entry name" value="rplP_bact"/>
    <property type="match status" value="1"/>
</dbReference>
<dbReference type="PANTHER" id="PTHR12220">
    <property type="entry name" value="50S/60S RIBOSOMAL PROTEIN L16"/>
    <property type="match status" value="1"/>
</dbReference>
<dbReference type="PANTHER" id="PTHR12220:SF13">
    <property type="entry name" value="LARGE RIBOSOMAL SUBUNIT PROTEIN UL16M"/>
    <property type="match status" value="1"/>
</dbReference>
<dbReference type="Pfam" id="PF00252">
    <property type="entry name" value="Ribosomal_L16"/>
    <property type="match status" value="1"/>
</dbReference>
<dbReference type="PRINTS" id="PR00060">
    <property type="entry name" value="RIBOSOMALL16"/>
</dbReference>
<dbReference type="SUPFAM" id="SSF54686">
    <property type="entry name" value="Ribosomal protein L16p/L10e"/>
    <property type="match status" value="1"/>
</dbReference>
<dbReference type="PROSITE" id="PS00586">
    <property type="entry name" value="RIBOSOMAL_L16_1"/>
    <property type="match status" value="1"/>
</dbReference>
<dbReference type="PROSITE" id="PS00701">
    <property type="entry name" value="RIBOSOMAL_L16_2"/>
    <property type="match status" value="1"/>
</dbReference>
<comment type="function">
    <text evidence="1">Binds 23S rRNA and is also seen to make contacts with the A and possibly P site tRNAs.</text>
</comment>
<comment type="subunit">
    <text evidence="1">Part of the 50S ribosomal subunit.</text>
</comment>
<comment type="similarity">
    <text evidence="1">Belongs to the universal ribosomal protein uL16 family.</text>
</comment>
<evidence type="ECO:0000255" key="1">
    <source>
        <dbReference type="HAMAP-Rule" id="MF_01342"/>
    </source>
</evidence>
<evidence type="ECO:0000305" key="2"/>
<feature type="chain" id="PRO_0000251679" description="Large ribosomal subunit protein uL16">
    <location>
        <begin position="1"/>
        <end position="137"/>
    </location>
</feature>
<protein>
    <recommendedName>
        <fullName evidence="1">Large ribosomal subunit protein uL16</fullName>
    </recommendedName>
    <alternativeName>
        <fullName evidence="2">50S ribosomal protein L16</fullName>
    </alternativeName>
</protein>
<keyword id="KW-0687">Ribonucleoprotein</keyword>
<keyword id="KW-0689">Ribosomal protein</keyword>
<keyword id="KW-0694">RNA-binding</keyword>
<keyword id="KW-0699">rRNA-binding</keyword>
<keyword id="KW-0820">tRNA-binding</keyword>
<accession>Q1JJ55</accession>
<sequence length="137" mass="15452">MLVPKRVKHRREFRGKMRGEAKGGKEVSFGEYGLQATTSHWITNRQIEAARIAMTRYMKRGGKVWIKIFPHKSYTAKAIGVRMGSGKGAPEGWVAPVKRGKVMFEIAGVSEEIAREALRLASHKLPVKCKFVKREAE</sequence>
<proteinExistence type="inferred from homology"/>
<name>RL16_STRPD</name>